<sequence>MAQKDHPNGPKKSASASSKRWMYEHVNDFYVKEATKKGLRSRAVFKLEEINKKDKLIRSGMTVVDLGAAPGSWSQWAVDTVGLKGKVIACDILPMDSIAGVDFLQGDFREDAVVNALLARIAGHKVDVVLSDMSPNMTGTVGIDQPKSMYLVELALEMCKEVLVKEGSFVVKVFMGSEFDLFMSEARKCFKSVKTRKPDSSRSRSREVYVVATGYKG</sequence>
<dbReference type="EC" id="2.1.1.166" evidence="1"/>
<dbReference type="EMBL" id="CP000510">
    <property type="protein sequence ID" value="ABM02653.1"/>
    <property type="molecule type" value="Genomic_DNA"/>
</dbReference>
<dbReference type="RefSeq" id="WP_011769216.1">
    <property type="nucleotide sequence ID" value="NC_008709.1"/>
</dbReference>
<dbReference type="SMR" id="A1ST38"/>
<dbReference type="STRING" id="357804.Ping_0810"/>
<dbReference type="KEGG" id="pin:Ping_0810"/>
<dbReference type="eggNOG" id="COG0293">
    <property type="taxonomic scope" value="Bacteria"/>
</dbReference>
<dbReference type="HOGENOM" id="CLU_009422_4_0_6"/>
<dbReference type="OrthoDB" id="9790080at2"/>
<dbReference type="Proteomes" id="UP000000639">
    <property type="component" value="Chromosome"/>
</dbReference>
<dbReference type="GO" id="GO:0005737">
    <property type="term" value="C:cytoplasm"/>
    <property type="evidence" value="ECO:0007669"/>
    <property type="project" value="UniProtKB-SubCell"/>
</dbReference>
<dbReference type="GO" id="GO:0008650">
    <property type="term" value="F:rRNA (uridine-2'-O-)-methyltransferase activity"/>
    <property type="evidence" value="ECO:0007669"/>
    <property type="project" value="UniProtKB-UniRule"/>
</dbReference>
<dbReference type="CDD" id="cd02440">
    <property type="entry name" value="AdoMet_MTases"/>
    <property type="match status" value="1"/>
</dbReference>
<dbReference type="FunFam" id="3.40.50.150:FF:000005">
    <property type="entry name" value="Ribosomal RNA large subunit methyltransferase E"/>
    <property type="match status" value="1"/>
</dbReference>
<dbReference type="Gene3D" id="3.40.50.150">
    <property type="entry name" value="Vaccinia Virus protein VP39"/>
    <property type="match status" value="1"/>
</dbReference>
<dbReference type="HAMAP" id="MF_01547">
    <property type="entry name" value="RNA_methyltr_E"/>
    <property type="match status" value="1"/>
</dbReference>
<dbReference type="InterPro" id="IPR050082">
    <property type="entry name" value="RNA_methyltr_RlmE"/>
</dbReference>
<dbReference type="InterPro" id="IPR002877">
    <property type="entry name" value="RNA_MeTrfase_FtsJ_dom"/>
</dbReference>
<dbReference type="InterPro" id="IPR015507">
    <property type="entry name" value="rRNA-MeTfrase_E"/>
</dbReference>
<dbReference type="InterPro" id="IPR029063">
    <property type="entry name" value="SAM-dependent_MTases_sf"/>
</dbReference>
<dbReference type="NCBIfam" id="NF008390">
    <property type="entry name" value="PRK11188.1"/>
    <property type="match status" value="1"/>
</dbReference>
<dbReference type="PANTHER" id="PTHR10920">
    <property type="entry name" value="RIBOSOMAL RNA METHYLTRANSFERASE"/>
    <property type="match status" value="1"/>
</dbReference>
<dbReference type="PANTHER" id="PTHR10920:SF18">
    <property type="entry name" value="RRNA METHYLTRANSFERASE 2, MITOCHONDRIAL"/>
    <property type="match status" value="1"/>
</dbReference>
<dbReference type="Pfam" id="PF01728">
    <property type="entry name" value="FtsJ"/>
    <property type="match status" value="1"/>
</dbReference>
<dbReference type="PIRSF" id="PIRSF005461">
    <property type="entry name" value="23S_rRNA_mtase"/>
    <property type="match status" value="1"/>
</dbReference>
<dbReference type="SUPFAM" id="SSF53335">
    <property type="entry name" value="S-adenosyl-L-methionine-dependent methyltransferases"/>
    <property type="match status" value="1"/>
</dbReference>
<evidence type="ECO:0000255" key="1">
    <source>
        <dbReference type="HAMAP-Rule" id="MF_01547"/>
    </source>
</evidence>
<organism>
    <name type="scientific">Psychromonas ingrahamii (strain DSM 17664 / CCUG 51855 / 37)</name>
    <dbReference type="NCBI Taxonomy" id="357804"/>
    <lineage>
        <taxon>Bacteria</taxon>
        <taxon>Pseudomonadati</taxon>
        <taxon>Pseudomonadota</taxon>
        <taxon>Gammaproteobacteria</taxon>
        <taxon>Alteromonadales</taxon>
        <taxon>Psychromonadaceae</taxon>
        <taxon>Psychromonas</taxon>
    </lineage>
</organism>
<name>RLME_PSYIN</name>
<proteinExistence type="inferred from homology"/>
<reference key="1">
    <citation type="journal article" date="2008" name="BMC Genomics">
        <title>Genomics of an extreme psychrophile, Psychromonas ingrahamii.</title>
        <authorList>
            <person name="Riley M."/>
            <person name="Staley J.T."/>
            <person name="Danchin A."/>
            <person name="Wang T.Z."/>
            <person name="Brettin T.S."/>
            <person name="Hauser L.J."/>
            <person name="Land M.L."/>
            <person name="Thompson L.S."/>
        </authorList>
    </citation>
    <scope>NUCLEOTIDE SEQUENCE [LARGE SCALE GENOMIC DNA]</scope>
    <source>
        <strain>DSM 17664 / CCUG 51855 / 37</strain>
    </source>
</reference>
<feature type="chain" id="PRO_0000282779" description="Ribosomal RNA large subunit methyltransferase E">
    <location>
        <begin position="1"/>
        <end position="217"/>
    </location>
</feature>
<feature type="active site" description="Proton acceptor" evidence="1">
    <location>
        <position position="172"/>
    </location>
</feature>
<feature type="binding site" evidence="1">
    <location>
        <position position="71"/>
    </location>
    <ligand>
        <name>S-adenosyl-L-methionine</name>
        <dbReference type="ChEBI" id="CHEBI:59789"/>
    </ligand>
</feature>
<feature type="binding site" evidence="1">
    <location>
        <position position="73"/>
    </location>
    <ligand>
        <name>S-adenosyl-L-methionine</name>
        <dbReference type="ChEBI" id="CHEBI:59789"/>
    </ligand>
</feature>
<feature type="binding site" evidence="1">
    <location>
        <position position="91"/>
    </location>
    <ligand>
        <name>S-adenosyl-L-methionine</name>
        <dbReference type="ChEBI" id="CHEBI:59789"/>
    </ligand>
</feature>
<feature type="binding site" evidence="1">
    <location>
        <position position="107"/>
    </location>
    <ligand>
        <name>S-adenosyl-L-methionine</name>
        <dbReference type="ChEBI" id="CHEBI:59789"/>
    </ligand>
</feature>
<feature type="binding site" evidence="1">
    <location>
        <position position="132"/>
    </location>
    <ligand>
        <name>S-adenosyl-L-methionine</name>
        <dbReference type="ChEBI" id="CHEBI:59789"/>
    </ligand>
</feature>
<gene>
    <name evidence="1" type="primary">rlmE</name>
    <name evidence="1" type="synonym">ftsJ</name>
    <name evidence="1" type="synonym">rrmJ</name>
    <name type="ordered locus">Ping_0810</name>
</gene>
<comment type="function">
    <text evidence="1">Specifically methylates the uridine in position 2552 of 23S rRNA at the 2'-O position of the ribose in the fully assembled 50S ribosomal subunit.</text>
</comment>
<comment type="catalytic activity">
    <reaction evidence="1">
        <text>uridine(2552) in 23S rRNA + S-adenosyl-L-methionine = 2'-O-methyluridine(2552) in 23S rRNA + S-adenosyl-L-homocysteine + H(+)</text>
        <dbReference type="Rhea" id="RHEA:42720"/>
        <dbReference type="Rhea" id="RHEA-COMP:10202"/>
        <dbReference type="Rhea" id="RHEA-COMP:10203"/>
        <dbReference type="ChEBI" id="CHEBI:15378"/>
        <dbReference type="ChEBI" id="CHEBI:57856"/>
        <dbReference type="ChEBI" id="CHEBI:59789"/>
        <dbReference type="ChEBI" id="CHEBI:65315"/>
        <dbReference type="ChEBI" id="CHEBI:74478"/>
        <dbReference type="EC" id="2.1.1.166"/>
    </reaction>
</comment>
<comment type="subcellular location">
    <subcellularLocation>
        <location evidence="1">Cytoplasm</location>
    </subcellularLocation>
</comment>
<comment type="similarity">
    <text evidence="1">Belongs to the class I-like SAM-binding methyltransferase superfamily. RNA methyltransferase RlmE family.</text>
</comment>
<accession>A1ST38</accession>
<keyword id="KW-0963">Cytoplasm</keyword>
<keyword id="KW-0489">Methyltransferase</keyword>
<keyword id="KW-1185">Reference proteome</keyword>
<keyword id="KW-0698">rRNA processing</keyword>
<keyword id="KW-0949">S-adenosyl-L-methionine</keyword>
<keyword id="KW-0808">Transferase</keyword>
<protein>
    <recommendedName>
        <fullName evidence="1">Ribosomal RNA large subunit methyltransferase E</fullName>
        <ecNumber evidence="1">2.1.1.166</ecNumber>
    </recommendedName>
    <alternativeName>
        <fullName evidence="1">23S rRNA Um2552 methyltransferase</fullName>
    </alternativeName>
    <alternativeName>
        <fullName evidence="1">rRNA (uridine-2'-O-)-methyltransferase</fullName>
    </alternativeName>
</protein>